<evidence type="ECO:0000250" key="1"/>
<evidence type="ECO:0000255" key="2">
    <source>
        <dbReference type="HAMAP-Rule" id="MF_00435"/>
    </source>
</evidence>
<evidence type="ECO:0000255" key="3">
    <source>
        <dbReference type="PROSITE-ProRule" id="PRU01197"/>
    </source>
</evidence>
<evidence type="ECO:0000255" key="4">
    <source>
        <dbReference type="PROSITE-ProRule" id="PRU01198"/>
    </source>
</evidence>
<keyword id="KW-0028">Amino-acid biosynthesis</keyword>
<keyword id="KW-0100">Branched-chain amino acid biosynthesis</keyword>
<keyword id="KW-0460">Magnesium</keyword>
<keyword id="KW-0479">Metal-binding</keyword>
<keyword id="KW-0521">NADP</keyword>
<keyword id="KW-0560">Oxidoreductase</keyword>
<keyword id="KW-1185">Reference proteome</keyword>
<keyword id="KW-0677">Repeat</keyword>
<gene>
    <name evidence="2" type="primary">ilvC</name>
    <name type="ordered locus">Z5285</name>
    <name type="ordered locus">ECs4708</name>
</gene>
<sequence length="491" mass="54064">MANYFNTLNLRQQLAQLGKCRFMGRDEFADGASYLQGKKVVIVGCGAQGLNQGLNMRDSGLDISYALRKEAIAEKRASWRKATENGFKVGTYEELIPQADLVVNLTPDKQHSDVVHTVQPLMKDGAALGYSHGFNIVEVGEQIRKDITVVMVAPKCPGTEVREEYKRGFGVPTLIAVHPENDPKGEGMAIAKAWAAATGGHRAGVLESSFVAEVKSDLMGEQTILCGMLQAGSLLCFDKLVEEGTDPAYAEKLIQFGWETITEALKQGGITLMMDRLSNPAKLRAYALSEQLKEIMAPLFQKHMDDIISGEFSSGMMADWANDDKKLLTWREETGKTAFETAPQYEGKIGEQEYFDKGVLMIAMVKAGVELAFETMVDSGIIEESAYYESLHELPLIANTIARKRLYEMNVVISDTAEYGNYLFSYACVPLLKPFMAELQPGDLGKAIPEGAVDNAQLRDLNEAIRSHAIEQVGKKLRGYMTDMKRIAVAG</sequence>
<feature type="initiator methionine" description="Removed" evidence="1">
    <location>
        <position position="1"/>
    </location>
</feature>
<feature type="chain" id="PRO_0000151311" description="Ketol-acid reductoisomerase (NADP(+))">
    <location>
        <begin position="2"/>
        <end position="491"/>
    </location>
</feature>
<feature type="domain" description="KARI N-terminal Rossmann" evidence="3">
    <location>
        <begin position="15"/>
        <end position="208"/>
    </location>
</feature>
<feature type="domain" description="KARI C-terminal knotted 1" evidence="4">
    <location>
        <begin position="209"/>
        <end position="344"/>
    </location>
</feature>
<feature type="domain" description="KARI C-terminal knotted 2" evidence="4">
    <location>
        <begin position="345"/>
        <end position="484"/>
    </location>
</feature>
<feature type="active site" evidence="2">
    <location>
        <position position="132"/>
    </location>
</feature>
<feature type="binding site" evidence="2">
    <location>
        <begin position="45"/>
        <end position="48"/>
    </location>
    <ligand>
        <name>NADP(+)</name>
        <dbReference type="ChEBI" id="CHEBI:58349"/>
    </ligand>
</feature>
<feature type="binding site" evidence="2">
    <location>
        <position position="68"/>
    </location>
    <ligand>
        <name>NADP(+)</name>
        <dbReference type="ChEBI" id="CHEBI:58349"/>
    </ligand>
</feature>
<feature type="binding site" evidence="2">
    <location>
        <position position="76"/>
    </location>
    <ligand>
        <name>NADP(+)</name>
        <dbReference type="ChEBI" id="CHEBI:58349"/>
    </ligand>
</feature>
<feature type="binding site" evidence="2">
    <location>
        <position position="78"/>
    </location>
    <ligand>
        <name>NADP(+)</name>
        <dbReference type="ChEBI" id="CHEBI:58349"/>
    </ligand>
</feature>
<feature type="binding site" evidence="2">
    <location>
        <begin position="108"/>
        <end position="110"/>
    </location>
    <ligand>
        <name>NADP(+)</name>
        <dbReference type="ChEBI" id="CHEBI:58349"/>
    </ligand>
</feature>
<feature type="binding site" evidence="2">
    <location>
        <position position="158"/>
    </location>
    <ligand>
        <name>NADP(+)</name>
        <dbReference type="ChEBI" id="CHEBI:58349"/>
    </ligand>
</feature>
<feature type="binding site" evidence="2">
    <location>
        <position position="217"/>
    </location>
    <ligand>
        <name>Mg(2+)</name>
        <dbReference type="ChEBI" id="CHEBI:18420"/>
        <label>1</label>
    </ligand>
</feature>
<feature type="binding site" evidence="2">
    <location>
        <position position="217"/>
    </location>
    <ligand>
        <name>Mg(2+)</name>
        <dbReference type="ChEBI" id="CHEBI:18420"/>
        <label>2</label>
    </ligand>
</feature>
<feature type="binding site" evidence="2">
    <location>
        <position position="221"/>
    </location>
    <ligand>
        <name>Mg(2+)</name>
        <dbReference type="ChEBI" id="CHEBI:18420"/>
        <label>1</label>
    </ligand>
</feature>
<feature type="binding site" evidence="2">
    <location>
        <position position="389"/>
    </location>
    <ligand>
        <name>Mg(2+)</name>
        <dbReference type="ChEBI" id="CHEBI:18420"/>
        <label>2</label>
    </ligand>
</feature>
<feature type="binding site" evidence="2">
    <location>
        <position position="393"/>
    </location>
    <ligand>
        <name>Mg(2+)</name>
        <dbReference type="ChEBI" id="CHEBI:18420"/>
        <label>2</label>
    </ligand>
</feature>
<feature type="binding site" evidence="2">
    <location>
        <position position="414"/>
    </location>
    <ligand>
        <name>substrate</name>
    </ligand>
</feature>
<name>ILVC_ECO57</name>
<organism>
    <name type="scientific">Escherichia coli O157:H7</name>
    <dbReference type="NCBI Taxonomy" id="83334"/>
    <lineage>
        <taxon>Bacteria</taxon>
        <taxon>Pseudomonadati</taxon>
        <taxon>Pseudomonadota</taxon>
        <taxon>Gammaproteobacteria</taxon>
        <taxon>Enterobacterales</taxon>
        <taxon>Enterobacteriaceae</taxon>
        <taxon>Escherichia</taxon>
    </lineage>
</organism>
<protein>
    <recommendedName>
        <fullName evidence="2">Ketol-acid reductoisomerase (NADP(+))</fullName>
        <shortName evidence="2">KARI</shortName>
        <ecNumber evidence="2">1.1.1.86</ecNumber>
    </recommendedName>
    <alternativeName>
        <fullName evidence="2">Acetohydroxy-acid isomeroreductase</fullName>
        <shortName evidence="2">AHIR</shortName>
    </alternativeName>
    <alternativeName>
        <fullName evidence="2">Alpha-keto-beta-hydroxylacyl reductoisomerase</fullName>
    </alternativeName>
    <alternativeName>
        <fullName evidence="2">Ketol-acid reductoisomerase type 2</fullName>
    </alternativeName>
    <alternativeName>
        <fullName evidence="2">Ketol-acid reductoisomerase type II</fullName>
    </alternativeName>
</protein>
<comment type="function">
    <text evidence="2">Involved in the biosynthesis of branched-chain amino acids (BCAA). Catalyzes an alkyl-migration followed by a ketol-acid reduction of (S)-2-acetolactate (S2AL) to yield (R)-2,3-dihydroxy-isovalerate. In the isomerase reaction, S2AL is rearranged via a Mg-dependent methyl migration to produce 3-hydroxy-3-methyl-2-ketobutyrate (HMKB). In the reductase reaction, this 2-ketoacid undergoes a metal-dependent reduction by NADPH to yield (R)-2,3-dihydroxy-isovalerate.</text>
</comment>
<comment type="catalytic activity">
    <reaction evidence="2">
        <text>(2R)-2,3-dihydroxy-3-methylbutanoate + NADP(+) = (2S)-2-acetolactate + NADPH + H(+)</text>
        <dbReference type="Rhea" id="RHEA:22068"/>
        <dbReference type="ChEBI" id="CHEBI:15378"/>
        <dbReference type="ChEBI" id="CHEBI:49072"/>
        <dbReference type="ChEBI" id="CHEBI:57783"/>
        <dbReference type="ChEBI" id="CHEBI:58349"/>
        <dbReference type="ChEBI" id="CHEBI:58476"/>
        <dbReference type="EC" id="1.1.1.86"/>
    </reaction>
</comment>
<comment type="catalytic activity">
    <reaction evidence="2">
        <text>(2R,3R)-2,3-dihydroxy-3-methylpentanoate + NADP(+) = (S)-2-ethyl-2-hydroxy-3-oxobutanoate + NADPH + H(+)</text>
        <dbReference type="Rhea" id="RHEA:13493"/>
        <dbReference type="ChEBI" id="CHEBI:15378"/>
        <dbReference type="ChEBI" id="CHEBI:49256"/>
        <dbReference type="ChEBI" id="CHEBI:49258"/>
        <dbReference type="ChEBI" id="CHEBI:57783"/>
        <dbReference type="ChEBI" id="CHEBI:58349"/>
        <dbReference type="EC" id="1.1.1.86"/>
    </reaction>
</comment>
<comment type="cofactor">
    <cofactor evidence="2">
        <name>Mg(2+)</name>
        <dbReference type="ChEBI" id="CHEBI:18420"/>
    </cofactor>
    <text evidence="2">Binds 2 magnesium ions per subunit.</text>
</comment>
<comment type="pathway">
    <text evidence="2">Amino-acid biosynthesis; L-isoleucine biosynthesis; L-isoleucine from 2-oxobutanoate: step 2/4.</text>
</comment>
<comment type="pathway">
    <text evidence="2">Amino-acid biosynthesis; L-valine biosynthesis; L-valine from pyruvate: step 2/4.</text>
</comment>
<comment type="similarity">
    <text evidence="2">Belongs to the ketol-acid reductoisomerase family.</text>
</comment>
<dbReference type="EC" id="1.1.1.86" evidence="2"/>
<dbReference type="EMBL" id="AE005174">
    <property type="protein sequence ID" value="AAG58969.1"/>
    <property type="molecule type" value="Genomic_DNA"/>
</dbReference>
<dbReference type="EMBL" id="BA000007">
    <property type="protein sequence ID" value="BAB38131.1"/>
    <property type="molecule type" value="Genomic_DNA"/>
</dbReference>
<dbReference type="PIR" id="D91217">
    <property type="entry name" value="D91217"/>
</dbReference>
<dbReference type="PIR" id="E86063">
    <property type="entry name" value="E86063"/>
</dbReference>
<dbReference type="RefSeq" id="NP_312735.1">
    <property type="nucleotide sequence ID" value="NC_002695.1"/>
</dbReference>
<dbReference type="RefSeq" id="WP_001301798.1">
    <property type="nucleotide sequence ID" value="NZ_VOAI01000017.1"/>
</dbReference>
<dbReference type="SMR" id="P58256"/>
<dbReference type="STRING" id="155864.Z5285"/>
<dbReference type="GeneID" id="915271"/>
<dbReference type="KEGG" id="ece:Z5285"/>
<dbReference type="KEGG" id="ecs:ECs_4708"/>
<dbReference type="PATRIC" id="fig|386585.9.peg.4913"/>
<dbReference type="eggNOG" id="COG0059">
    <property type="taxonomic scope" value="Bacteria"/>
</dbReference>
<dbReference type="HOGENOM" id="CLU_551905_0_0_6"/>
<dbReference type="OMA" id="ILCFDKM"/>
<dbReference type="UniPathway" id="UPA00047">
    <property type="reaction ID" value="UER00056"/>
</dbReference>
<dbReference type="UniPathway" id="UPA00049">
    <property type="reaction ID" value="UER00060"/>
</dbReference>
<dbReference type="Proteomes" id="UP000000558">
    <property type="component" value="Chromosome"/>
</dbReference>
<dbReference type="Proteomes" id="UP000002519">
    <property type="component" value="Chromosome"/>
</dbReference>
<dbReference type="GO" id="GO:0005829">
    <property type="term" value="C:cytosol"/>
    <property type="evidence" value="ECO:0007669"/>
    <property type="project" value="TreeGrafter"/>
</dbReference>
<dbReference type="GO" id="GO:0004455">
    <property type="term" value="F:ketol-acid reductoisomerase activity"/>
    <property type="evidence" value="ECO:0007669"/>
    <property type="project" value="UniProtKB-UniRule"/>
</dbReference>
<dbReference type="GO" id="GO:0000287">
    <property type="term" value="F:magnesium ion binding"/>
    <property type="evidence" value="ECO:0007669"/>
    <property type="project" value="UniProtKB-UniRule"/>
</dbReference>
<dbReference type="GO" id="GO:0009097">
    <property type="term" value="P:isoleucine biosynthetic process"/>
    <property type="evidence" value="ECO:0007669"/>
    <property type="project" value="UniProtKB-UniRule"/>
</dbReference>
<dbReference type="GO" id="GO:0009099">
    <property type="term" value="P:L-valine biosynthetic process"/>
    <property type="evidence" value="ECO:0007669"/>
    <property type="project" value="UniProtKB-UniRule"/>
</dbReference>
<dbReference type="FunFam" id="1.10.1040.10:FF:000007">
    <property type="entry name" value="Ketol-acid reductoisomerase (NADP(+))"/>
    <property type="match status" value="1"/>
</dbReference>
<dbReference type="FunFam" id="3.40.50.720:FF:000043">
    <property type="entry name" value="Ketol-acid reductoisomerase (NADP(+))"/>
    <property type="match status" value="1"/>
</dbReference>
<dbReference type="Gene3D" id="1.10.1040.10">
    <property type="entry name" value="N-(1-d-carboxylethyl)-l-norvaline Dehydrogenase, domain 2"/>
    <property type="match status" value="1"/>
</dbReference>
<dbReference type="Gene3D" id="3.40.50.720">
    <property type="entry name" value="NAD(P)-binding Rossmann-like Domain"/>
    <property type="match status" value="1"/>
</dbReference>
<dbReference type="HAMAP" id="MF_00435">
    <property type="entry name" value="IlvC"/>
    <property type="match status" value="1"/>
</dbReference>
<dbReference type="InterPro" id="IPR008927">
    <property type="entry name" value="6-PGluconate_DH-like_C_sf"/>
</dbReference>
<dbReference type="InterPro" id="IPR013328">
    <property type="entry name" value="6PGD_dom2"/>
</dbReference>
<dbReference type="InterPro" id="IPR013023">
    <property type="entry name" value="KARI"/>
</dbReference>
<dbReference type="InterPro" id="IPR000506">
    <property type="entry name" value="KARI_C"/>
</dbReference>
<dbReference type="InterPro" id="IPR013116">
    <property type="entry name" value="KARI_N"/>
</dbReference>
<dbReference type="InterPro" id="IPR036291">
    <property type="entry name" value="NAD(P)-bd_dom_sf"/>
</dbReference>
<dbReference type="NCBIfam" id="TIGR00465">
    <property type="entry name" value="ilvC"/>
    <property type="match status" value="1"/>
</dbReference>
<dbReference type="NCBIfam" id="NF003557">
    <property type="entry name" value="PRK05225.1"/>
    <property type="match status" value="1"/>
</dbReference>
<dbReference type="PANTHER" id="PTHR21371">
    <property type="entry name" value="KETOL-ACID REDUCTOISOMERASE, MITOCHONDRIAL"/>
    <property type="match status" value="1"/>
</dbReference>
<dbReference type="PANTHER" id="PTHR21371:SF1">
    <property type="entry name" value="KETOL-ACID REDUCTOISOMERASE, MITOCHONDRIAL"/>
    <property type="match status" value="1"/>
</dbReference>
<dbReference type="Pfam" id="PF01450">
    <property type="entry name" value="KARI_C"/>
    <property type="match status" value="2"/>
</dbReference>
<dbReference type="Pfam" id="PF07991">
    <property type="entry name" value="KARI_N"/>
    <property type="match status" value="1"/>
</dbReference>
<dbReference type="SUPFAM" id="SSF48179">
    <property type="entry name" value="6-phosphogluconate dehydrogenase C-terminal domain-like"/>
    <property type="match status" value="2"/>
</dbReference>
<dbReference type="SUPFAM" id="SSF51735">
    <property type="entry name" value="NAD(P)-binding Rossmann-fold domains"/>
    <property type="match status" value="1"/>
</dbReference>
<dbReference type="PROSITE" id="PS51851">
    <property type="entry name" value="KARI_C"/>
    <property type="match status" value="2"/>
</dbReference>
<dbReference type="PROSITE" id="PS51850">
    <property type="entry name" value="KARI_N"/>
    <property type="match status" value="1"/>
</dbReference>
<accession>P58256</accession>
<proteinExistence type="inferred from homology"/>
<reference key="1">
    <citation type="journal article" date="2001" name="Nature">
        <title>Genome sequence of enterohaemorrhagic Escherichia coli O157:H7.</title>
        <authorList>
            <person name="Perna N.T."/>
            <person name="Plunkett G. III"/>
            <person name="Burland V."/>
            <person name="Mau B."/>
            <person name="Glasner J.D."/>
            <person name="Rose D.J."/>
            <person name="Mayhew G.F."/>
            <person name="Evans P.S."/>
            <person name="Gregor J."/>
            <person name="Kirkpatrick H.A."/>
            <person name="Posfai G."/>
            <person name="Hackett J."/>
            <person name="Klink S."/>
            <person name="Boutin A."/>
            <person name="Shao Y."/>
            <person name="Miller L."/>
            <person name="Grotbeck E.J."/>
            <person name="Davis N.W."/>
            <person name="Lim A."/>
            <person name="Dimalanta E.T."/>
            <person name="Potamousis K."/>
            <person name="Apodaca J."/>
            <person name="Anantharaman T.S."/>
            <person name="Lin J."/>
            <person name="Yen G."/>
            <person name="Schwartz D.C."/>
            <person name="Welch R.A."/>
            <person name="Blattner F.R."/>
        </authorList>
    </citation>
    <scope>NUCLEOTIDE SEQUENCE [LARGE SCALE GENOMIC DNA]</scope>
    <source>
        <strain>O157:H7 / EDL933 / ATCC 700927 / EHEC</strain>
    </source>
</reference>
<reference key="2">
    <citation type="journal article" date="2001" name="DNA Res.">
        <title>Complete genome sequence of enterohemorrhagic Escherichia coli O157:H7 and genomic comparison with a laboratory strain K-12.</title>
        <authorList>
            <person name="Hayashi T."/>
            <person name="Makino K."/>
            <person name="Ohnishi M."/>
            <person name="Kurokawa K."/>
            <person name="Ishii K."/>
            <person name="Yokoyama K."/>
            <person name="Han C.-G."/>
            <person name="Ohtsubo E."/>
            <person name="Nakayama K."/>
            <person name="Murata T."/>
            <person name="Tanaka M."/>
            <person name="Tobe T."/>
            <person name="Iida T."/>
            <person name="Takami H."/>
            <person name="Honda T."/>
            <person name="Sasakawa C."/>
            <person name="Ogasawara N."/>
            <person name="Yasunaga T."/>
            <person name="Kuhara S."/>
            <person name="Shiba T."/>
            <person name="Hattori M."/>
            <person name="Shinagawa H."/>
        </authorList>
    </citation>
    <scope>NUCLEOTIDE SEQUENCE [LARGE SCALE GENOMIC DNA]</scope>
    <source>
        <strain>O157:H7 / Sakai / RIMD 0509952 / EHEC</strain>
    </source>
</reference>